<organism>
    <name type="scientific">Sodalis glossinidius (strain morsitans)</name>
    <dbReference type="NCBI Taxonomy" id="343509"/>
    <lineage>
        <taxon>Bacteria</taxon>
        <taxon>Pseudomonadati</taxon>
        <taxon>Pseudomonadota</taxon>
        <taxon>Gammaproteobacteria</taxon>
        <taxon>Enterobacterales</taxon>
        <taxon>Bruguierivoracaceae</taxon>
        <taxon>Sodalis</taxon>
    </lineage>
</organism>
<evidence type="ECO:0000255" key="1">
    <source>
        <dbReference type="HAMAP-Rule" id="MF_00139"/>
    </source>
</evidence>
<evidence type="ECO:0000255" key="2">
    <source>
        <dbReference type="PROSITE-ProRule" id="PRU01202"/>
    </source>
</evidence>
<reference key="1">
    <citation type="journal article" date="2006" name="Genome Res.">
        <title>Massive genome erosion and functional adaptations provide insights into the symbiotic lifestyle of Sodalis glossinidius in the tsetse host.</title>
        <authorList>
            <person name="Toh H."/>
            <person name="Weiss B.L."/>
            <person name="Perkin S.A.H."/>
            <person name="Yamashita A."/>
            <person name="Oshima K."/>
            <person name="Hattori M."/>
            <person name="Aksoy S."/>
        </authorList>
    </citation>
    <scope>NUCLEOTIDE SEQUENCE [LARGE SCALE GENOMIC DNA]</scope>
    <source>
        <strain>morsitans</strain>
    </source>
</reference>
<feature type="chain" id="PRO_1000018960" description="Bifunctional purine biosynthesis protein PurH">
    <location>
        <begin position="1"/>
        <end position="529"/>
    </location>
</feature>
<feature type="domain" description="MGS-like" evidence="2">
    <location>
        <begin position="1"/>
        <end position="148"/>
    </location>
</feature>
<comment type="catalytic activity">
    <reaction evidence="1">
        <text>(6R)-10-formyltetrahydrofolate + 5-amino-1-(5-phospho-beta-D-ribosyl)imidazole-4-carboxamide = 5-formamido-1-(5-phospho-D-ribosyl)imidazole-4-carboxamide + (6S)-5,6,7,8-tetrahydrofolate</text>
        <dbReference type="Rhea" id="RHEA:22192"/>
        <dbReference type="ChEBI" id="CHEBI:57453"/>
        <dbReference type="ChEBI" id="CHEBI:58467"/>
        <dbReference type="ChEBI" id="CHEBI:58475"/>
        <dbReference type="ChEBI" id="CHEBI:195366"/>
        <dbReference type="EC" id="2.1.2.3"/>
    </reaction>
</comment>
<comment type="catalytic activity">
    <reaction evidence="1">
        <text>IMP + H2O = 5-formamido-1-(5-phospho-D-ribosyl)imidazole-4-carboxamide</text>
        <dbReference type="Rhea" id="RHEA:18445"/>
        <dbReference type="ChEBI" id="CHEBI:15377"/>
        <dbReference type="ChEBI" id="CHEBI:58053"/>
        <dbReference type="ChEBI" id="CHEBI:58467"/>
        <dbReference type="EC" id="3.5.4.10"/>
    </reaction>
</comment>
<comment type="pathway">
    <text evidence="1">Purine metabolism; IMP biosynthesis via de novo pathway; 5-formamido-1-(5-phospho-D-ribosyl)imidazole-4-carboxamide from 5-amino-1-(5-phospho-D-ribosyl)imidazole-4-carboxamide (10-formyl THF route): step 1/1.</text>
</comment>
<comment type="pathway">
    <text evidence="1">Purine metabolism; IMP biosynthesis via de novo pathway; IMP from 5-formamido-1-(5-phospho-D-ribosyl)imidazole-4-carboxamide: step 1/1.</text>
</comment>
<comment type="domain">
    <text evidence="1">The IMP cyclohydrolase activity resides in the N-terminal region.</text>
</comment>
<comment type="similarity">
    <text evidence="1">Belongs to the PurH family.</text>
</comment>
<dbReference type="EC" id="2.1.2.3" evidence="1"/>
<dbReference type="EC" id="3.5.4.10" evidence="1"/>
<dbReference type="EMBL" id="AP008232">
    <property type="protein sequence ID" value="BAE73418.1"/>
    <property type="molecule type" value="Genomic_DNA"/>
</dbReference>
<dbReference type="RefSeq" id="WP_011410007.1">
    <property type="nucleotide sequence ID" value="NC_007712.1"/>
</dbReference>
<dbReference type="SMR" id="Q2NWQ7"/>
<dbReference type="STRING" id="343509.SG0143"/>
<dbReference type="KEGG" id="sgl:SG0143"/>
<dbReference type="eggNOG" id="COG0138">
    <property type="taxonomic scope" value="Bacteria"/>
</dbReference>
<dbReference type="HOGENOM" id="CLU_016316_5_2_6"/>
<dbReference type="OrthoDB" id="9802065at2"/>
<dbReference type="UniPathway" id="UPA00074">
    <property type="reaction ID" value="UER00133"/>
</dbReference>
<dbReference type="UniPathway" id="UPA00074">
    <property type="reaction ID" value="UER00135"/>
</dbReference>
<dbReference type="Proteomes" id="UP000001932">
    <property type="component" value="Chromosome"/>
</dbReference>
<dbReference type="GO" id="GO:0005829">
    <property type="term" value="C:cytosol"/>
    <property type="evidence" value="ECO:0007669"/>
    <property type="project" value="TreeGrafter"/>
</dbReference>
<dbReference type="GO" id="GO:0003937">
    <property type="term" value="F:IMP cyclohydrolase activity"/>
    <property type="evidence" value="ECO:0007669"/>
    <property type="project" value="UniProtKB-UniRule"/>
</dbReference>
<dbReference type="GO" id="GO:0004643">
    <property type="term" value="F:phosphoribosylaminoimidazolecarboxamide formyltransferase activity"/>
    <property type="evidence" value="ECO:0007669"/>
    <property type="project" value="UniProtKB-UniRule"/>
</dbReference>
<dbReference type="GO" id="GO:0006189">
    <property type="term" value="P:'de novo' IMP biosynthetic process"/>
    <property type="evidence" value="ECO:0007669"/>
    <property type="project" value="UniProtKB-UniRule"/>
</dbReference>
<dbReference type="CDD" id="cd01421">
    <property type="entry name" value="IMPCH"/>
    <property type="match status" value="1"/>
</dbReference>
<dbReference type="FunFam" id="3.40.140.20:FF:000001">
    <property type="entry name" value="Bifunctional purine biosynthesis protein PurH"/>
    <property type="match status" value="1"/>
</dbReference>
<dbReference type="FunFam" id="3.40.140.20:FF:000002">
    <property type="entry name" value="Bifunctional purine biosynthesis protein PurH"/>
    <property type="match status" value="1"/>
</dbReference>
<dbReference type="FunFam" id="3.40.50.1380:FF:000001">
    <property type="entry name" value="Bifunctional purine biosynthesis protein PurH"/>
    <property type="match status" value="1"/>
</dbReference>
<dbReference type="Gene3D" id="3.40.140.20">
    <property type="match status" value="2"/>
</dbReference>
<dbReference type="Gene3D" id="3.40.50.1380">
    <property type="entry name" value="Methylglyoxal synthase-like domain"/>
    <property type="match status" value="1"/>
</dbReference>
<dbReference type="HAMAP" id="MF_00139">
    <property type="entry name" value="PurH"/>
    <property type="match status" value="1"/>
</dbReference>
<dbReference type="InterPro" id="IPR024051">
    <property type="entry name" value="AICAR_Tfase_dup_dom_sf"/>
</dbReference>
<dbReference type="InterPro" id="IPR016193">
    <property type="entry name" value="Cytidine_deaminase-like"/>
</dbReference>
<dbReference type="InterPro" id="IPR011607">
    <property type="entry name" value="MGS-like_dom"/>
</dbReference>
<dbReference type="InterPro" id="IPR036914">
    <property type="entry name" value="MGS-like_dom_sf"/>
</dbReference>
<dbReference type="InterPro" id="IPR002695">
    <property type="entry name" value="PurH-like"/>
</dbReference>
<dbReference type="NCBIfam" id="NF002049">
    <property type="entry name" value="PRK00881.1"/>
    <property type="match status" value="1"/>
</dbReference>
<dbReference type="NCBIfam" id="TIGR00355">
    <property type="entry name" value="purH"/>
    <property type="match status" value="1"/>
</dbReference>
<dbReference type="PANTHER" id="PTHR11692:SF0">
    <property type="entry name" value="BIFUNCTIONAL PURINE BIOSYNTHESIS PROTEIN ATIC"/>
    <property type="match status" value="1"/>
</dbReference>
<dbReference type="PANTHER" id="PTHR11692">
    <property type="entry name" value="BIFUNCTIONAL PURINE BIOSYNTHESIS PROTEIN PURH"/>
    <property type="match status" value="1"/>
</dbReference>
<dbReference type="Pfam" id="PF01808">
    <property type="entry name" value="AICARFT_IMPCHas"/>
    <property type="match status" value="1"/>
</dbReference>
<dbReference type="Pfam" id="PF02142">
    <property type="entry name" value="MGS"/>
    <property type="match status" value="1"/>
</dbReference>
<dbReference type="PIRSF" id="PIRSF000414">
    <property type="entry name" value="AICARFT_IMPCHas"/>
    <property type="match status" value="1"/>
</dbReference>
<dbReference type="SMART" id="SM00798">
    <property type="entry name" value="AICARFT_IMPCHas"/>
    <property type="match status" value="1"/>
</dbReference>
<dbReference type="SMART" id="SM00851">
    <property type="entry name" value="MGS"/>
    <property type="match status" value="1"/>
</dbReference>
<dbReference type="SUPFAM" id="SSF53927">
    <property type="entry name" value="Cytidine deaminase-like"/>
    <property type="match status" value="1"/>
</dbReference>
<dbReference type="SUPFAM" id="SSF52335">
    <property type="entry name" value="Methylglyoxal synthase-like"/>
    <property type="match status" value="1"/>
</dbReference>
<dbReference type="PROSITE" id="PS51855">
    <property type="entry name" value="MGS"/>
    <property type="match status" value="1"/>
</dbReference>
<protein>
    <recommendedName>
        <fullName evidence="1">Bifunctional purine biosynthesis protein PurH</fullName>
    </recommendedName>
    <domain>
        <recommendedName>
            <fullName evidence="1">Phosphoribosylaminoimidazolecarboxamide formyltransferase</fullName>
            <ecNumber evidence="1">2.1.2.3</ecNumber>
        </recommendedName>
        <alternativeName>
            <fullName evidence="1">AICAR transformylase</fullName>
        </alternativeName>
    </domain>
    <domain>
        <recommendedName>
            <fullName evidence="1">IMP cyclohydrolase</fullName>
            <ecNumber evidence="1">3.5.4.10</ecNumber>
        </recommendedName>
        <alternativeName>
            <fullName evidence="1">ATIC</fullName>
        </alternativeName>
        <alternativeName>
            <fullName evidence="1">IMP synthase</fullName>
        </alternativeName>
        <alternativeName>
            <fullName evidence="1">Inosinicase</fullName>
        </alternativeName>
    </domain>
</protein>
<sequence>MQPPRPVRRALLSVSDKTGILAFARSLSERGVELLSTGGTARLLAEAGLPVTEVSDYTGFPEMMDGRVKTLHPKVHGGILGRRDIDDAIMREHDIAPIDMVVVNLYPFAATVARAECTREEAVENIDIGGPTMVRSAAKNHKDVAIVVNSANYPAVVAEMDQHSGSLTLETRFDLAIKAFEHTAAYDSMIANYFGSQVPAYHGDAKQPSGRFPRTLNLNFIKKQDMRYGENSHQMAAFYTDPETPEASVATAQQLQGKALSYNNIADTDAALECVKTFTEAACVIVKHANPCGVATSDTLLAAYNRAYQTDPTSAFGGIIAFNRPLDADTAKAIVSRQFVEVIIAPAVDDDALGVLAGKQNVRVLACGNLQQPSPGLDFKRVNGGLLVQERDVGMVDLQDLSVVTERQPTEEEMRDALFCWKVAKFVKSNAIVYARYQRTIGIGAGQMSRVYSAKIAGIKAADEGLDVKGSAMASDAFFPFRDGIDAAAAVGVRCVIQPGGSIHDNEIIAAANEHGIAMIFTHMRHFRH</sequence>
<keyword id="KW-0378">Hydrolase</keyword>
<keyword id="KW-0511">Multifunctional enzyme</keyword>
<keyword id="KW-0658">Purine biosynthesis</keyword>
<keyword id="KW-0808">Transferase</keyword>
<proteinExistence type="inferred from homology"/>
<gene>
    <name evidence="1" type="primary">purH</name>
    <name type="ordered locus">SG0143</name>
</gene>
<accession>Q2NWQ7</accession>
<name>PUR9_SODGM</name>